<gene>
    <name evidence="1" type="primary">fabH</name>
    <name type="ordered locus">YPO1597</name>
    <name type="ordered locus">y1756</name>
    <name type="ordered locus">YP_2257</name>
</gene>
<proteinExistence type="evidence at protein level"/>
<evidence type="ECO:0000255" key="1">
    <source>
        <dbReference type="HAMAP-Rule" id="MF_01815"/>
    </source>
</evidence>
<evidence type="ECO:0007829" key="2">
    <source>
        <dbReference type="PDB" id="4Z19"/>
    </source>
</evidence>
<dbReference type="EC" id="2.3.1.180" evidence="1"/>
<dbReference type="EMBL" id="AL590842">
    <property type="protein sequence ID" value="CAL20242.1"/>
    <property type="molecule type" value="Genomic_DNA"/>
</dbReference>
<dbReference type="EMBL" id="AE009952">
    <property type="protein sequence ID" value="AAM85324.1"/>
    <property type="molecule type" value="Genomic_DNA"/>
</dbReference>
<dbReference type="EMBL" id="AE017042">
    <property type="protein sequence ID" value="AAS62463.1"/>
    <property type="molecule type" value="Genomic_DNA"/>
</dbReference>
<dbReference type="PIR" id="AH0194">
    <property type="entry name" value="AH0194"/>
</dbReference>
<dbReference type="RefSeq" id="WP_002210933.1">
    <property type="nucleotide sequence ID" value="NZ_WUCM01000105.1"/>
</dbReference>
<dbReference type="RefSeq" id="YP_002346608.1">
    <property type="nucleotide sequence ID" value="NC_003143.1"/>
</dbReference>
<dbReference type="PDB" id="4YLT">
    <property type="method" value="X-ray"/>
    <property type="resolution" value="2.20 A"/>
    <property type="chains" value="A=1-316"/>
</dbReference>
<dbReference type="PDB" id="4Z19">
    <property type="method" value="X-ray"/>
    <property type="resolution" value="1.80 A"/>
    <property type="chains" value="A=1-316"/>
</dbReference>
<dbReference type="PDBsum" id="4YLT"/>
<dbReference type="PDBsum" id="4Z19"/>
<dbReference type="SMR" id="Q8ZFT7"/>
<dbReference type="STRING" id="214092.YPO1597"/>
<dbReference type="PaxDb" id="214092-YPO1597"/>
<dbReference type="DNASU" id="1146703"/>
<dbReference type="EnsemblBacteria" id="AAS62463">
    <property type="protein sequence ID" value="AAS62463"/>
    <property type="gene ID" value="YP_2257"/>
</dbReference>
<dbReference type="KEGG" id="ype:YPO1597"/>
<dbReference type="KEGG" id="ypk:y1756"/>
<dbReference type="KEGG" id="ypm:YP_2257"/>
<dbReference type="PATRIC" id="fig|214092.21.peg.1940"/>
<dbReference type="eggNOG" id="COG0332">
    <property type="taxonomic scope" value="Bacteria"/>
</dbReference>
<dbReference type="HOGENOM" id="CLU_039592_3_1_6"/>
<dbReference type="OMA" id="WGSEGDK"/>
<dbReference type="OrthoDB" id="9815506at2"/>
<dbReference type="BRENDA" id="2.3.1.180">
    <property type="organism ID" value="4559"/>
</dbReference>
<dbReference type="UniPathway" id="UPA00094"/>
<dbReference type="EvolutionaryTrace" id="Q8ZFT7"/>
<dbReference type="Proteomes" id="UP000000815">
    <property type="component" value="Chromosome"/>
</dbReference>
<dbReference type="Proteomes" id="UP000001019">
    <property type="component" value="Chromosome"/>
</dbReference>
<dbReference type="Proteomes" id="UP000002490">
    <property type="component" value="Chromosome"/>
</dbReference>
<dbReference type="GO" id="GO:0005737">
    <property type="term" value="C:cytoplasm"/>
    <property type="evidence" value="ECO:0007669"/>
    <property type="project" value="UniProtKB-SubCell"/>
</dbReference>
<dbReference type="GO" id="GO:0004315">
    <property type="term" value="F:3-oxoacyl-[acyl-carrier-protein] synthase activity"/>
    <property type="evidence" value="ECO:0007669"/>
    <property type="project" value="InterPro"/>
</dbReference>
<dbReference type="GO" id="GO:0033818">
    <property type="term" value="F:beta-ketoacyl-acyl-carrier-protein synthase III activity"/>
    <property type="evidence" value="ECO:0007669"/>
    <property type="project" value="UniProtKB-UniRule"/>
</dbReference>
<dbReference type="GO" id="GO:0006633">
    <property type="term" value="P:fatty acid biosynthetic process"/>
    <property type="evidence" value="ECO:0007669"/>
    <property type="project" value="UniProtKB-UniRule"/>
</dbReference>
<dbReference type="CDD" id="cd00830">
    <property type="entry name" value="KAS_III"/>
    <property type="match status" value="1"/>
</dbReference>
<dbReference type="FunFam" id="3.40.47.10:FF:000004">
    <property type="entry name" value="3-oxoacyl-[acyl-carrier-protein] synthase 3"/>
    <property type="match status" value="1"/>
</dbReference>
<dbReference type="Gene3D" id="3.40.47.10">
    <property type="match status" value="1"/>
</dbReference>
<dbReference type="HAMAP" id="MF_01815">
    <property type="entry name" value="FabH"/>
    <property type="match status" value="1"/>
</dbReference>
<dbReference type="InterPro" id="IPR013747">
    <property type="entry name" value="ACP_syn_III_C"/>
</dbReference>
<dbReference type="InterPro" id="IPR013751">
    <property type="entry name" value="ACP_syn_III_N"/>
</dbReference>
<dbReference type="InterPro" id="IPR004655">
    <property type="entry name" value="FabH"/>
</dbReference>
<dbReference type="InterPro" id="IPR016039">
    <property type="entry name" value="Thiolase-like"/>
</dbReference>
<dbReference type="NCBIfam" id="TIGR00747">
    <property type="entry name" value="fabH"/>
    <property type="match status" value="1"/>
</dbReference>
<dbReference type="NCBIfam" id="NF006829">
    <property type="entry name" value="PRK09352.1"/>
    <property type="match status" value="1"/>
</dbReference>
<dbReference type="PANTHER" id="PTHR43091">
    <property type="entry name" value="3-OXOACYL-[ACYL-CARRIER-PROTEIN] SYNTHASE"/>
    <property type="match status" value="1"/>
</dbReference>
<dbReference type="PANTHER" id="PTHR43091:SF1">
    <property type="entry name" value="BETA-KETOACYL-[ACYL-CARRIER-PROTEIN] SYNTHASE III, CHLOROPLASTIC"/>
    <property type="match status" value="1"/>
</dbReference>
<dbReference type="Pfam" id="PF08545">
    <property type="entry name" value="ACP_syn_III"/>
    <property type="match status" value="1"/>
</dbReference>
<dbReference type="Pfam" id="PF08541">
    <property type="entry name" value="ACP_syn_III_C"/>
    <property type="match status" value="1"/>
</dbReference>
<dbReference type="SUPFAM" id="SSF53901">
    <property type="entry name" value="Thiolase-like"/>
    <property type="match status" value="1"/>
</dbReference>
<reference key="1">
    <citation type="journal article" date="2001" name="Nature">
        <title>Genome sequence of Yersinia pestis, the causative agent of plague.</title>
        <authorList>
            <person name="Parkhill J."/>
            <person name="Wren B.W."/>
            <person name="Thomson N.R."/>
            <person name="Titball R.W."/>
            <person name="Holden M.T.G."/>
            <person name="Prentice M.B."/>
            <person name="Sebaihia M."/>
            <person name="James K.D."/>
            <person name="Churcher C.M."/>
            <person name="Mungall K.L."/>
            <person name="Baker S."/>
            <person name="Basham D."/>
            <person name="Bentley S.D."/>
            <person name="Brooks K."/>
            <person name="Cerdeno-Tarraga A.-M."/>
            <person name="Chillingworth T."/>
            <person name="Cronin A."/>
            <person name="Davies R.M."/>
            <person name="Davis P."/>
            <person name="Dougan G."/>
            <person name="Feltwell T."/>
            <person name="Hamlin N."/>
            <person name="Holroyd S."/>
            <person name="Jagels K."/>
            <person name="Karlyshev A.V."/>
            <person name="Leather S."/>
            <person name="Moule S."/>
            <person name="Oyston P.C.F."/>
            <person name="Quail M.A."/>
            <person name="Rutherford K.M."/>
            <person name="Simmonds M."/>
            <person name="Skelton J."/>
            <person name="Stevens K."/>
            <person name="Whitehead S."/>
            <person name="Barrell B.G."/>
        </authorList>
    </citation>
    <scope>NUCLEOTIDE SEQUENCE [LARGE SCALE GENOMIC DNA]</scope>
    <source>
        <strain>CO-92 / Biovar Orientalis</strain>
    </source>
</reference>
<reference key="2">
    <citation type="journal article" date="2002" name="J. Bacteriol.">
        <title>Genome sequence of Yersinia pestis KIM.</title>
        <authorList>
            <person name="Deng W."/>
            <person name="Burland V."/>
            <person name="Plunkett G. III"/>
            <person name="Boutin A."/>
            <person name="Mayhew G.F."/>
            <person name="Liss P."/>
            <person name="Perna N.T."/>
            <person name="Rose D.J."/>
            <person name="Mau B."/>
            <person name="Zhou S."/>
            <person name="Schwartz D.C."/>
            <person name="Fetherston J.D."/>
            <person name="Lindler L.E."/>
            <person name="Brubaker R.R."/>
            <person name="Plano G.V."/>
            <person name="Straley S.C."/>
            <person name="McDonough K.A."/>
            <person name="Nilles M.L."/>
            <person name="Matson J.S."/>
            <person name="Blattner F.R."/>
            <person name="Perry R.D."/>
        </authorList>
    </citation>
    <scope>NUCLEOTIDE SEQUENCE [LARGE SCALE GENOMIC DNA]</scope>
    <source>
        <strain>KIM10+ / Biovar Mediaevalis</strain>
    </source>
</reference>
<reference key="3">
    <citation type="journal article" date="2004" name="DNA Res.">
        <title>Complete genome sequence of Yersinia pestis strain 91001, an isolate avirulent to humans.</title>
        <authorList>
            <person name="Song Y."/>
            <person name="Tong Z."/>
            <person name="Wang J."/>
            <person name="Wang L."/>
            <person name="Guo Z."/>
            <person name="Han Y."/>
            <person name="Zhang J."/>
            <person name="Pei D."/>
            <person name="Zhou D."/>
            <person name="Qin H."/>
            <person name="Pang X."/>
            <person name="Han Y."/>
            <person name="Zhai J."/>
            <person name="Li M."/>
            <person name="Cui B."/>
            <person name="Qi Z."/>
            <person name="Jin L."/>
            <person name="Dai R."/>
            <person name="Chen F."/>
            <person name="Li S."/>
            <person name="Ye C."/>
            <person name="Du Z."/>
            <person name="Lin W."/>
            <person name="Wang J."/>
            <person name="Yu J."/>
            <person name="Yang H."/>
            <person name="Wang J."/>
            <person name="Huang P."/>
            <person name="Yang R."/>
        </authorList>
    </citation>
    <scope>NUCLEOTIDE SEQUENCE [LARGE SCALE GENOMIC DNA]</scope>
    <source>
        <strain>91001 / Biovar Mediaevalis</strain>
    </source>
</reference>
<organism>
    <name type="scientific">Yersinia pestis</name>
    <dbReference type="NCBI Taxonomy" id="632"/>
    <lineage>
        <taxon>Bacteria</taxon>
        <taxon>Pseudomonadati</taxon>
        <taxon>Pseudomonadota</taxon>
        <taxon>Gammaproteobacteria</taxon>
        <taxon>Enterobacterales</taxon>
        <taxon>Yersiniaceae</taxon>
        <taxon>Yersinia</taxon>
    </lineage>
</organism>
<feature type="chain" id="PRO_0000110515" description="Beta-ketoacyl-[acyl-carrier-protein] synthase III">
    <location>
        <begin position="1"/>
        <end position="316"/>
    </location>
</feature>
<feature type="region of interest" description="ACP-binding" evidence="1">
    <location>
        <begin position="244"/>
        <end position="248"/>
    </location>
</feature>
<feature type="active site" evidence="1">
    <location>
        <position position="112"/>
    </location>
</feature>
<feature type="active site" evidence="1">
    <location>
        <position position="243"/>
    </location>
</feature>
<feature type="active site" evidence="1">
    <location>
        <position position="273"/>
    </location>
</feature>
<feature type="strand" evidence="2">
    <location>
        <begin position="2"/>
        <end position="11"/>
    </location>
</feature>
<feature type="strand" evidence="2">
    <location>
        <begin position="14"/>
        <end position="18"/>
    </location>
</feature>
<feature type="helix" evidence="2">
    <location>
        <begin position="19"/>
        <end position="26"/>
    </location>
</feature>
<feature type="helix" evidence="2">
    <location>
        <begin position="30"/>
        <end position="37"/>
    </location>
</feature>
<feature type="strand" evidence="2">
    <location>
        <begin position="40"/>
        <end position="44"/>
    </location>
</feature>
<feature type="helix" evidence="2">
    <location>
        <begin position="51"/>
        <end position="66"/>
    </location>
</feature>
<feature type="helix" evidence="2">
    <location>
        <begin position="70"/>
        <end position="72"/>
    </location>
</feature>
<feature type="strand" evidence="2">
    <location>
        <begin position="73"/>
        <end position="79"/>
    </location>
</feature>
<feature type="strand" evidence="2">
    <location>
        <begin position="86"/>
        <end position="88"/>
    </location>
</feature>
<feature type="helix" evidence="2">
    <location>
        <begin position="90"/>
        <end position="98"/>
    </location>
</feature>
<feature type="strand" evidence="2">
    <location>
        <begin position="104"/>
        <end position="108"/>
    </location>
</feature>
<feature type="helix" evidence="2">
    <location>
        <begin position="111"/>
        <end position="113"/>
    </location>
</feature>
<feature type="helix" evidence="2">
    <location>
        <begin position="114"/>
        <end position="127"/>
    </location>
</feature>
<feature type="strand" evidence="2">
    <location>
        <begin position="132"/>
        <end position="140"/>
    </location>
</feature>
<feature type="helix" evidence="2">
    <location>
        <begin position="142"/>
        <end position="145"/>
    </location>
</feature>
<feature type="helix" evidence="2">
    <location>
        <begin position="151"/>
        <end position="154"/>
    </location>
</feature>
<feature type="strand" evidence="2">
    <location>
        <begin position="160"/>
        <end position="171"/>
    </location>
</feature>
<feature type="strand" evidence="2">
    <location>
        <begin position="173"/>
        <end position="181"/>
    </location>
</feature>
<feature type="helix" evidence="2">
    <location>
        <begin position="183"/>
        <end position="188"/>
    </location>
</feature>
<feature type="helix" evidence="2">
    <location>
        <begin position="208"/>
        <end position="229"/>
    </location>
</feature>
<feature type="helix" evidence="2">
    <location>
        <begin position="234"/>
        <end position="236"/>
    </location>
</feature>
<feature type="strand" evidence="2">
    <location>
        <begin position="239"/>
        <end position="242"/>
    </location>
</feature>
<feature type="helix" evidence="2">
    <location>
        <begin position="247"/>
        <end position="257"/>
    </location>
</feature>
<feature type="helix" evidence="2">
    <location>
        <begin position="261"/>
        <end position="263"/>
    </location>
</feature>
<feature type="helix" evidence="2">
    <location>
        <begin position="268"/>
        <end position="271"/>
    </location>
</feature>
<feature type="helix" evidence="2">
    <location>
        <begin position="275"/>
        <end position="277"/>
    </location>
</feature>
<feature type="helix" evidence="2">
    <location>
        <begin position="278"/>
        <end position="288"/>
    </location>
</feature>
<feature type="strand" evidence="2">
    <location>
        <begin position="297"/>
        <end position="304"/>
    </location>
</feature>
<feature type="turn" evidence="2">
    <location>
        <begin position="305"/>
        <end position="307"/>
    </location>
</feature>
<feature type="strand" evidence="2">
    <location>
        <begin position="308"/>
        <end position="315"/>
    </location>
</feature>
<keyword id="KW-0002">3D-structure</keyword>
<keyword id="KW-0012">Acyltransferase</keyword>
<keyword id="KW-0963">Cytoplasm</keyword>
<keyword id="KW-0275">Fatty acid biosynthesis</keyword>
<keyword id="KW-0276">Fatty acid metabolism</keyword>
<keyword id="KW-0444">Lipid biosynthesis</keyword>
<keyword id="KW-0443">Lipid metabolism</keyword>
<keyword id="KW-0511">Multifunctional enzyme</keyword>
<keyword id="KW-1185">Reference proteome</keyword>
<keyword id="KW-0808">Transferase</keyword>
<name>FABH_YERPE</name>
<protein>
    <recommendedName>
        <fullName evidence="1">Beta-ketoacyl-[acyl-carrier-protein] synthase III</fullName>
        <shortName evidence="1">Beta-ketoacyl-ACP synthase III</shortName>
        <shortName evidence="1">KAS III</shortName>
        <ecNumber evidence="1">2.3.1.180</ecNumber>
    </recommendedName>
    <alternativeName>
        <fullName evidence="1">3-oxoacyl-[acyl-carrier-protein] synthase 3</fullName>
    </alternativeName>
    <alternativeName>
        <fullName evidence="1">3-oxoacyl-[acyl-carrier-protein] synthase III</fullName>
    </alternativeName>
</protein>
<accession>Q8ZFT7</accession>
<accession>Q0WGI0</accession>
<comment type="function">
    <text evidence="1">Catalyzes the condensation reaction of fatty acid synthesis by the addition to an acyl acceptor of two carbons from malonyl-ACP. Catalyzes the first condensation reaction which initiates fatty acid synthesis and may therefore play a role in governing the total rate of fatty acid production. Possesses both acetoacetyl-ACP synthase and acetyl transacylase activities. Its substrate specificity determines the biosynthesis of branched-chain and/or straight-chain of fatty acids.</text>
</comment>
<comment type="catalytic activity">
    <reaction evidence="1">
        <text>malonyl-[ACP] + acetyl-CoA + H(+) = 3-oxobutanoyl-[ACP] + CO2 + CoA</text>
        <dbReference type="Rhea" id="RHEA:12080"/>
        <dbReference type="Rhea" id="RHEA-COMP:9623"/>
        <dbReference type="Rhea" id="RHEA-COMP:9625"/>
        <dbReference type="ChEBI" id="CHEBI:15378"/>
        <dbReference type="ChEBI" id="CHEBI:16526"/>
        <dbReference type="ChEBI" id="CHEBI:57287"/>
        <dbReference type="ChEBI" id="CHEBI:57288"/>
        <dbReference type="ChEBI" id="CHEBI:78449"/>
        <dbReference type="ChEBI" id="CHEBI:78450"/>
        <dbReference type="EC" id="2.3.1.180"/>
    </reaction>
</comment>
<comment type="pathway">
    <text evidence="1">Lipid metabolism; fatty acid biosynthesis.</text>
</comment>
<comment type="subunit">
    <text evidence="1">Homodimer.</text>
</comment>
<comment type="subcellular location">
    <subcellularLocation>
        <location evidence="1">Cytoplasm</location>
    </subcellularLocation>
</comment>
<comment type="domain">
    <text evidence="1">The last Arg residue of the ACP-binding site is essential for the weak association between ACP/AcpP and FabH.</text>
</comment>
<comment type="similarity">
    <text evidence="1">Belongs to the thiolase-like superfamily. FabH family.</text>
</comment>
<sequence>MYTKILGTGSYLPVQVRSNADLEKMVDTSDEWIVTRTGIRERRIAGLDETVATMGFQAAEKALEMAGIDKDDIGLIIVATTSSSHAFPSSACQVQRMLGIKDAASFDLAAACAGFTYALSVADQYVKSGAVKHAIVIGSDVLSRALDPEDRGTIILFGDGAGAVVLGASEQPGIMSTHLHADGRYGELLALPYPDRQQDQPAYVTMAGNEVFKVAVTELAHIVDETLQANNLDRTALDWLVPHQANLRIISATAKKLGMGMDKVVITLDRHGNTSAASVPSAFDEAVRDGRIQRGQLVLLEAFGGGFTWGSALVRF</sequence>